<evidence type="ECO:0000250" key="1"/>
<evidence type="ECO:0000255" key="2"/>
<evidence type="ECO:0000255" key="3">
    <source>
        <dbReference type="PROSITE-ProRule" id="PRU00031"/>
    </source>
</evidence>
<evidence type="ECO:0000255" key="4">
    <source>
        <dbReference type="PROSITE-ProRule" id="PRU00722"/>
    </source>
</evidence>
<evidence type="ECO:0000305" key="5"/>
<name>WFDC8_MOUSE</name>
<dbReference type="EMBL" id="AY757956">
    <property type="protein sequence ID" value="AAU93641.1"/>
    <property type="molecule type" value="mRNA"/>
</dbReference>
<dbReference type="EMBL" id="AL591478">
    <property type="status" value="NOT_ANNOTATED_CDS"/>
    <property type="molecule type" value="Genomic_DNA"/>
</dbReference>
<dbReference type="CCDS" id="CCDS38324.1"/>
<dbReference type="RefSeq" id="NP_001074019.1">
    <property type="nucleotide sequence ID" value="NM_001080550.3"/>
</dbReference>
<dbReference type="RefSeq" id="XP_030107555.1">
    <property type="nucleotide sequence ID" value="XM_030251695.1"/>
</dbReference>
<dbReference type="SMR" id="Q4KUS1"/>
<dbReference type="FunCoup" id="Q4KUS1">
    <property type="interactions" value="2"/>
</dbReference>
<dbReference type="STRING" id="10090.ENSMUSP00000104963"/>
<dbReference type="MEROPS" id="I02.978"/>
<dbReference type="GlyGen" id="Q4KUS1">
    <property type="glycosylation" value="1 site, 1 N-linked glycan (1 site)"/>
</dbReference>
<dbReference type="PhosphoSitePlus" id="Q4KUS1"/>
<dbReference type="PaxDb" id="10090-ENSMUSP00000104962"/>
<dbReference type="ProteomicsDB" id="299766"/>
<dbReference type="Antibodypedia" id="63192">
    <property type="antibodies" value="32 antibodies from 7 providers"/>
</dbReference>
<dbReference type="DNASU" id="277343"/>
<dbReference type="Ensembl" id="ENSMUST00000109338.2">
    <property type="protein sequence ID" value="ENSMUSP00000104962.2"/>
    <property type="gene ID" value="ENSMUSG00000070533.12"/>
</dbReference>
<dbReference type="GeneID" id="277343"/>
<dbReference type="KEGG" id="mmu:277343"/>
<dbReference type="UCSC" id="uc008nvk.2">
    <property type="organism name" value="mouse"/>
</dbReference>
<dbReference type="AGR" id="MGI:2685552"/>
<dbReference type="CTD" id="90199"/>
<dbReference type="MGI" id="MGI:2685552">
    <property type="gene designation" value="Wfdc8"/>
</dbReference>
<dbReference type="VEuPathDB" id="HostDB:ENSMUSG00000070533"/>
<dbReference type="eggNOG" id="KOG4295">
    <property type="taxonomic scope" value="Eukaryota"/>
</dbReference>
<dbReference type="GeneTree" id="ENSGT00940000162037"/>
<dbReference type="HOGENOM" id="CLU_092095_0_0_1"/>
<dbReference type="InParanoid" id="Q4KUS1"/>
<dbReference type="OMA" id="GFCPHKP"/>
<dbReference type="OrthoDB" id="196393at2759"/>
<dbReference type="PhylomeDB" id="Q4KUS1"/>
<dbReference type="TreeFam" id="TF335948"/>
<dbReference type="BioGRID-ORCS" id="277343">
    <property type="hits" value="2 hits in 78 CRISPR screens"/>
</dbReference>
<dbReference type="ChiTaRS" id="Wfdc8">
    <property type="organism name" value="mouse"/>
</dbReference>
<dbReference type="PRO" id="PR:Q4KUS1"/>
<dbReference type="Proteomes" id="UP000000589">
    <property type="component" value="Chromosome 2"/>
</dbReference>
<dbReference type="RNAct" id="Q4KUS1">
    <property type="molecule type" value="protein"/>
</dbReference>
<dbReference type="Bgee" id="ENSMUSG00000070533">
    <property type="expression patterns" value="Expressed in testis and 4 other cell types or tissues"/>
</dbReference>
<dbReference type="ExpressionAtlas" id="Q4KUS1">
    <property type="expression patterns" value="baseline and differential"/>
</dbReference>
<dbReference type="GO" id="GO:0005576">
    <property type="term" value="C:extracellular region"/>
    <property type="evidence" value="ECO:0007669"/>
    <property type="project" value="InterPro"/>
</dbReference>
<dbReference type="GO" id="GO:0016020">
    <property type="term" value="C:membrane"/>
    <property type="evidence" value="ECO:0007669"/>
    <property type="project" value="UniProtKB-SubCell"/>
</dbReference>
<dbReference type="GO" id="GO:0004867">
    <property type="term" value="F:serine-type endopeptidase inhibitor activity"/>
    <property type="evidence" value="ECO:0007669"/>
    <property type="project" value="UniProtKB-KW"/>
</dbReference>
<dbReference type="CDD" id="cd00109">
    <property type="entry name" value="Kunitz-type"/>
    <property type="match status" value="1"/>
</dbReference>
<dbReference type="CDD" id="cd00199">
    <property type="entry name" value="WAP"/>
    <property type="match status" value="1"/>
</dbReference>
<dbReference type="FunFam" id="4.10.410.10:FF:000020">
    <property type="entry name" value="Collagen, type VI, alpha 3"/>
    <property type="match status" value="1"/>
</dbReference>
<dbReference type="Gene3D" id="4.10.75.10">
    <property type="entry name" value="Elafin-like"/>
    <property type="match status" value="3"/>
</dbReference>
<dbReference type="Gene3D" id="4.10.410.10">
    <property type="entry name" value="Pancreatic trypsin inhibitor Kunitz domain"/>
    <property type="match status" value="1"/>
</dbReference>
<dbReference type="InterPro" id="IPR036645">
    <property type="entry name" value="Elafin-like_sf"/>
</dbReference>
<dbReference type="InterPro" id="IPR002223">
    <property type="entry name" value="Kunitz_BPTI"/>
</dbReference>
<dbReference type="InterPro" id="IPR036880">
    <property type="entry name" value="Kunitz_BPTI_sf"/>
</dbReference>
<dbReference type="InterPro" id="IPR020901">
    <property type="entry name" value="Prtase_inh_Kunz-CS"/>
</dbReference>
<dbReference type="InterPro" id="IPR008197">
    <property type="entry name" value="WAP_dom"/>
</dbReference>
<dbReference type="PANTHER" id="PTHR47769">
    <property type="entry name" value="WAP FOUR-DISULFIDE CORE DOMAIN PROTEIN 8"/>
    <property type="match status" value="1"/>
</dbReference>
<dbReference type="PANTHER" id="PTHR47769:SF1">
    <property type="entry name" value="WAP FOUR-DISULFIDE CORE DOMAIN PROTEIN 8"/>
    <property type="match status" value="1"/>
</dbReference>
<dbReference type="Pfam" id="PF00014">
    <property type="entry name" value="Kunitz_BPTI"/>
    <property type="match status" value="1"/>
</dbReference>
<dbReference type="Pfam" id="PF00095">
    <property type="entry name" value="WAP"/>
    <property type="match status" value="3"/>
</dbReference>
<dbReference type="PRINTS" id="PR00003">
    <property type="entry name" value="4DISULPHCORE"/>
</dbReference>
<dbReference type="PRINTS" id="PR00759">
    <property type="entry name" value="BASICPTASE"/>
</dbReference>
<dbReference type="SMART" id="SM00131">
    <property type="entry name" value="KU"/>
    <property type="match status" value="1"/>
</dbReference>
<dbReference type="SMART" id="SM00217">
    <property type="entry name" value="WAP"/>
    <property type="match status" value="3"/>
</dbReference>
<dbReference type="SUPFAM" id="SSF57362">
    <property type="entry name" value="BPTI-like"/>
    <property type="match status" value="1"/>
</dbReference>
<dbReference type="SUPFAM" id="SSF57256">
    <property type="entry name" value="Elafin-like"/>
    <property type="match status" value="3"/>
</dbReference>
<dbReference type="PROSITE" id="PS00280">
    <property type="entry name" value="BPTI_KUNITZ_1"/>
    <property type="match status" value="1"/>
</dbReference>
<dbReference type="PROSITE" id="PS50279">
    <property type="entry name" value="BPTI_KUNITZ_2"/>
    <property type="match status" value="1"/>
</dbReference>
<dbReference type="PROSITE" id="PS51390">
    <property type="entry name" value="WAP"/>
    <property type="match status" value="3"/>
</dbReference>
<proteinExistence type="evidence at transcript level"/>
<organism>
    <name type="scientific">Mus musculus</name>
    <name type="common">Mouse</name>
    <dbReference type="NCBI Taxonomy" id="10090"/>
    <lineage>
        <taxon>Eukaryota</taxon>
        <taxon>Metazoa</taxon>
        <taxon>Chordata</taxon>
        <taxon>Craniata</taxon>
        <taxon>Vertebrata</taxon>
        <taxon>Euteleostomi</taxon>
        <taxon>Mammalia</taxon>
        <taxon>Eutheria</taxon>
        <taxon>Euarchontoglires</taxon>
        <taxon>Glires</taxon>
        <taxon>Rodentia</taxon>
        <taxon>Myomorpha</taxon>
        <taxon>Muroidea</taxon>
        <taxon>Muridae</taxon>
        <taxon>Murinae</taxon>
        <taxon>Mus</taxon>
        <taxon>Mus</taxon>
    </lineage>
</organism>
<sequence length="273" mass="31279">MAKCGVPQRVPGDCFRPVSTRHPRQIPSCFSICFLTHEAQSLRALAHSWWSGALLLLLLFLFLSLEQTSTSYNAKIKQKVGECPRQRLECRNESLSSCKTDFNCKAHFKCCQFACGRKCMDPYEEPCMLPSDKGNCQDILTRWYFDSQKHQCRAFLYSGCRGNANNFLTKTDCRNACMFVEKKGQCPLFPFQMRMECPASCKNDMDCPEKEKCCESRCGFICARVWLVKTGFCPRKPIVCSKIDKPKCLQDIDCPLDEKCCTRCGLKCLKPRH</sequence>
<reference key="1">
    <citation type="journal article" date="2005" name="Biochem. Biophys. Res. Commun.">
        <title>The evolution of a genetic locus encoding small serine proteinase inhibitors.</title>
        <authorList>
            <person name="Clauss A."/>
            <person name="Lilja H."/>
            <person name="Lundwall A."/>
        </authorList>
    </citation>
    <scope>NUCLEOTIDE SEQUENCE [MRNA]</scope>
    <source>
        <strain>C57BL/6J</strain>
    </source>
</reference>
<reference key="2">
    <citation type="journal article" date="2009" name="PLoS Biol.">
        <title>Lineage-specific biology revealed by a finished genome assembly of the mouse.</title>
        <authorList>
            <person name="Church D.M."/>
            <person name="Goodstadt L."/>
            <person name="Hillier L.W."/>
            <person name="Zody M.C."/>
            <person name="Goldstein S."/>
            <person name="She X."/>
            <person name="Bult C.J."/>
            <person name="Agarwala R."/>
            <person name="Cherry J.L."/>
            <person name="DiCuccio M."/>
            <person name="Hlavina W."/>
            <person name="Kapustin Y."/>
            <person name="Meric P."/>
            <person name="Maglott D."/>
            <person name="Birtle Z."/>
            <person name="Marques A.C."/>
            <person name="Graves T."/>
            <person name="Zhou S."/>
            <person name="Teague B."/>
            <person name="Potamousis K."/>
            <person name="Churas C."/>
            <person name="Place M."/>
            <person name="Herschleb J."/>
            <person name="Runnheim R."/>
            <person name="Forrest D."/>
            <person name="Amos-Landgraf J."/>
            <person name="Schwartz D.C."/>
            <person name="Cheng Z."/>
            <person name="Lindblad-Toh K."/>
            <person name="Eichler E.E."/>
            <person name="Ponting C.P."/>
        </authorList>
    </citation>
    <scope>NUCLEOTIDE SEQUENCE [LARGE SCALE GENOMIC DNA]</scope>
    <source>
        <strain>C57BL/6J</strain>
    </source>
</reference>
<accession>Q4KUS1</accession>
<comment type="subcellular location">
    <subcellularLocation>
        <location evidence="5">Membrane</location>
        <topology evidence="5">Single-pass membrane protein</topology>
    </subcellularLocation>
</comment>
<gene>
    <name type="primary">Wfdc8</name>
    <name type="synonym">Gm706</name>
</gene>
<protein>
    <recommendedName>
        <fullName>WAP four-disulfide core domain protein 8</fullName>
    </recommendedName>
    <alternativeName>
        <fullName>Putative protease inhibitor WAP8C</fullName>
    </alternativeName>
</protein>
<keyword id="KW-1015">Disulfide bond</keyword>
<keyword id="KW-0472">Membrane</keyword>
<keyword id="KW-0646">Protease inhibitor</keyword>
<keyword id="KW-1185">Reference proteome</keyword>
<keyword id="KW-0677">Repeat</keyword>
<keyword id="KW-0722">Serine protease inhibitor</keyword>
<keyword id="KW-0812">Transmembrane</keyword>
<keyword id="KW-1133">Transmembrane helix</keyword>
<feature type="chain" id="PRO_0000307717" description="WAP four-disulfide core domain protein 8">
    <location>
        <begin position="1"/>
        <end position="273"/>
    </location>
</feature>
<feature type="transmembrane region" description="Helical" evidence="2">
    <location>
        <begin position="45"/>
        <end position="65"/>
    </location>
</feature>
<feature type="domain" description="WAP 1" evidence="4">
    <location>
        <begin position="76"/>
        <end position="123"/>
    </location>
</feature>
<feature type="domain" description="BPTI/Kunitz inhibitor" evidence="3">
    <location>
        <begin position="127"/>
        <end position="177"/>
    </location>
</feature>
<feature type="domain" description="WAP 2" evidence="4">
    <location>
        <begin position="179"/>
        <end position="226"/>
    </location>
</feature>
<feature type="domain" description="WAP 3" evidence="4">
    <location>
        <begin position="228"/>
        <end position="272"/>
    </location>
</feature>
<feature type="disulfide bond" evidence="1">
    <location>
        <begin position="83"/>
        <end position="111"/>
    </location>
</feature>
<feature type="disulfide bond" evidence="1">
    <location>
        <begin position="90"/>
        <end position="115"/>
    </location>
</feature>
<feature type="disulfide bond" evidence="1">
    <location>
        <begin position="98"/>
        <end position="110"/>
    </location>
</feature>
<feature type="disulfide bond" evidence="1">
    <location>
        <begin position="104"/>
        <end position="119"/>
    </location>
</feature>
<feature type="disulfide bond" evidence="1">
    <location>
        <begin position="127"/>
        <end position="177"/>
    </location>
</feature>
<feature type="disulfide bond" evidence="1">
    <location>
        <begin position="136"/>
        <end position="160"/>
    </location>
</feature>
<feature type="disulfide bond" evidence="1">
    <location>
        <begin position="152"/>
        <end position="173"/>
    </location>
</feature>
<feature type="disulfide bond" evidence="1">
    <location>
        <begin position="186"/>
        <end position="214"/>
    </location>
</feature>
<feature type="disulfide bond" evidence="1">
    <location>
        <begin position="197"/>
        <end position="218"/>
    </location>
</feature>
<feature type="disulfide bond" evidence="1">
    <location>
        <begin position="201"/>
        <end position="213"/>
    </location>
</feature>
<feature type="disulfide bond" evidence="1">
    <location>
        <begin position="207"/>
        <end position="222"/>
    </location>
</feature>
<feature type="disulfide bond" evidence="1">
    <location>
        <begin position="233"/>
        <end position="261"/>
    </location>
</feature>
<feature type="disulfide bond" evidence="1">
    <location>
        <begin position="240"/>
        <end position="264"/>
    </location>
</feature>
<feature type="disulfide bond" evidence="1">
    <location>
        <begin position="248"/>
        <end position="260"/>
    </location>
</feature>
<feature type="disulfide bond" evidence="1">
    <location>
        <begin position="254"/>
        <end position="268"/>
    </location>
</feature>